<sequence length="422" mass="48919">MAYFIDRRLNGKNKSMVNRQRFLRRYKSQIKQSIAEAINKRSVTDVDSGESVSIPTGDINEPMFHQGRGGTRHRVHPGNDHFVQNDRVERPQGGGGGGSGQGNASQDGEGEDEFVFQISKDEYLDLLFEDLALPNLKKNQYKQLTEYKTHRAGYTANGVPANISVVRSLQNSLARRTAMTAGKRRALHELEDELTQMENTEPVQLLEEERLRKEIAELRKKIESVPFIDTFDLRYKNYERRPEPSSQAVMFCLMDVSGSMDQATKDMAKRFYILLYLFLSRTYKNVDVVYIRHHTQAKEVDEQEFFYSQETGGTIVSSALKLMNEVVEERYDPAQWNIYAAQASDGDNWADDSPLCHELLAKKLLPMVRYYSYIEITRRAHQTLWREYEDLQAKCENFAMQHIREPDDIYPVFRELFHKQTA</sequence>
<proteinExistence type="inferred from homology"/>
<dbReference type="EMBL" id="CP000826">
    <property type="protein sequence ID" value="ABV41833.1"/>
    <property type="molecule type" value="Genomic_DNA"/>
</dbReference>
<dbReference type="SMR" id="A8GFE3"/>
<dbReference type="STRING" id="399741.Spro_2732"/>
<dbReference type="KEGG" id="spe:Spro_2732"/>
<dbReference type="eggNOG" id="COG2718">
    <property type="taxonomic scope" value="Bacteria"/>
</dbReference>
<dbReference type="HOGENOM" id="CLU_049702_0_0_6"/>
<dbReference type="OrthoDB" id="9788289at2"/>
<dbReference type="HAMAP" id="MF_01232">
    <property type="entry name" value="UPF0229"/>
    <property type="match status" value="1"/>
</dbReference>
<dbReference type="InterPro" id="IPR006698">
    <property type="entry name" value="UPF0229"/>
</dbReference>
<dbReference type="NCBIfam" id="NF003707">
    <property type="entry name" value="PRK05325.1-2"/>
    <property type="match status" value="1"/>
</dbReference>
<dbReference type="NCBIfam" id="NF003708">
    <property type="entry name" value="PRK05325.1-3"/>
    <property type="match status" value="1"/>
</dbReference>
<dbReference type="PANTHER" id="PTHR30510">
    <property type="entry name" value="UPF0229 PROTEIN YEAH"/>
    <property type="match status" value="1"/>
</dbReference>
<dbReference type="PANTHER" id="PTHR30510:SF2">
    <property type="entry name" value="UPF0229 PROTEIN YEAH"/>
    <property type="match status" value="1"/>
</dbReference>
<dbReference type="Pfam" id="PF04285">
    <property type="entry name" value="DUF444"/>
    <property type="match status" value="1"/>
</dbReference>
<reference key="1">
    <citation type="submission" date="2007-09" db="EMBL/GenBank/DDBJ databases">
        <title>Complete sequence of chromosome of Serratia proteamaculans 568.</title>
        <authorList>
            <consortium name="US DOE Joint Genome Institute"/>
            <person name="Copeland A."/>
            <person name="Lucas S."/>
            <person name="Lapidus A."/>
            <person name="Barry K."/>
            <person name="Glavina del Rio T."/>
            <person name="Dalin E."/>
            <person name="Tice H."/>
            <person name="Pitluck S."/>
            <person name="Chain P."/>
            <person name="Malfatti S."/>
            <person name="Shin M."/>
            <person name="Vergez L."/>
            <person name="Schmutz J."/>
            <person name="Larimer F."/>
            <person name="Land M."/>
            <person name="Hauser L."/>
            <person name="Kyrpides N."/>
            <person name="Kim E."/>
            <person name="Taghavi S."/>
            <person name="Newman L."/>
            <person name="Vangronsveld J."/>
            <person name="van der Lelie D."/>
            <person name="Richardson P."/>
        </authorList>
    </citation>
    <scope>NUCLEOTIDE SEQUENCE [LARGE SCALE GENOMIC DNA]</scope>
    <source>
        <strain>568</strain>
    </source>
</reference>
<feature type="chain" id="PRO_1000066881" description="UPF0229 protein Spro_2732">
    <location>
        <begin position="1"/>
        <end position="422"/>
    </location>
</feature>
<feature type="region of interest" description="Disordered" evidence="2">
    <location>
        <begin position="77"/>
        <end position="109"/>
    </location>
</feature>
<feature type="compositionally biased region" description="Basic and acidic residues" evidence="2">
    <location>
        <begin position="77"/>
        <end position="90"/>
    </location>
</feature>
<feature type="compositionally biased region" description="Gly residues" evidence="2">
    <location>
        <begin position="92"/>
        <end position="101"/>
    </location>
</feature>
<name>Y2732_SERP5</name>
<evidence type="ECO:0000255" key="1">
    <source>
        <dbReference type="HAMAP-Rule" id="MF_01232"/>
    </source>
</evidence>
<evidence type="ECO:0000256" key="2">
    <source>
        <dbReference type="SAM" id="MobiDB-lite"/>
    </source>
</evidence>
<comment type="similarity">
    <text evidence="1">Belongs to the UPF0229 family.</text>
</comment>
<protein>
    <recommendedName>
        <fullName evidence="1">UPF0229 protein Spro_2732</fullName>
    </recommendedName>
</protein>
<gene>
    <name type="ordered locus">Spro_2732</name>
</gene>
<organism>
    <name type="scientific">Serratia proteamaculans (strain 568)</name>
    <dbReference type="NCBI Taxonomy" id="399741"/>
    <lineage>
        <taxon>Bacteria</taxon>
        <taxon>Pseudomonadati</taxon>
        <taxon>Pseudomonadota</taxon>
        <taxon>Gammaproteobacteria</taxon>
        <taxon>Enterobacterales</taxon>
        <taxon>Yersiniaceae</taxon>
        <taxon>Serratia</taxon>
    </lineage>
</organism>
<accession>A8GFE3</accession>